<keyword id="KW-0024">Alternative initiation</keyword>
<keyword id="KW-0963">Cytoplasm</keyword>
<keyword id="KW-0256">Endoplasmic reticulum</keyword>
<keyword id="KW-0472">Membrane</keyword>
<keyword id="KW-0800">Toxin</keyword>
<keyword id="KW-0812">Transmembrane</keyword>
<keyword id="KW-1133">Transmembrane helix</keyword>
<keyword id="KW-0926">Vacuole</keyword>
<comment type="function">
    <text evidence="5">Promotes unequal transmission of alleles from the parental zygote to progeny spores by acting as poison/antidote system where the poison and antidote proteins are produced from the same locus; the poison component is trans-acting and targets all spores within an ascus whereas the antidote component is spore-specific, leading to poisoning of all progeny that do not inherit the allele.</text>
</comment>
<comment type="function">
    <molecule>Isoform 1</molecule>
    <text evidence="1">Localizes isoform 2 to the vacuole thereby facilitating its degradation.</text>
</comment>
<comment type="function">
    <molecule>Isoform 2</molecule>
    <text evidence="1">Forms toxic aggregates that disrupt spore maturation.</text>
</comment>
<comment type="subunit">
    <text evidence="1 2">Homomer (By similarity). Forms protein aggregates (By similarity). The two isoforms can interact with each other and with themselves (By similarity). High sequence similarity is required for their interaction (By similarity).</text>
</comment>
<comment type="subcellular location">
    <molecule>Isoform 1</molecule>
    <subcellularLocation>
        <location evidence="1 3">Spore membrane</location>
        <topology evidence="3">Multi-pass membrane protein</topology>
    </subcellularLocation>
    <subcellularLocation>
        <location evidence="1 3">Vacuole membrane</location>
        <topology evidence="3">Multi-pass membrane protein</topology>
    </subcellularLocation>
    <text evidence="1">Contained within spores expressing the isoform and localizes isoform 2 to the vacuole.</text>
</comment>
<comment type="subcellular location">
    <molecule>Isoform 2</molecule>
    <subcellularLocation>
        <location evidence="1">Ascus epiplasm</location>
    </subcellularLocation>
    <subcellularLocation>
        <location evidence="1">Cytoplasm</location>
    </subcellularLocation>
    <subcellularLocation>
        <location evidence="1 3">Spore membrane</location>
        <topology evidence="3">Multi-pass membrane protein</topology>
    </subcellularLocation>
    <subcellularLocation>
        <location evidence="1 3">Vacuole membrane</location>
        <topology evidence="3">Multi-pass membrane protein</topology>
    </subcellularLocation>
    <subcellularLocation>
        <location evidence="1 3">Endoplasmic reticulum membrane</location>
        <topology evidence="3">Multi-pass membrane protein</topology>
    </subcellularLocation>
    <text evidence="1">Localizes in trans to all spores within an ascus. Localization to the spore vacuole is dependent on isoform 1.</text>
</comment>
<comment type="alternative products">
    <event type="alternative initiation"/>
    <isoform>
        <id>A0A482AQV2-1</id>
        <name>1</name>
        <name evidence="6">Antidote</name>
        <name evidence="7">Suppressor</name>
        <sequence type="displayed"/>
    </isoform>
    <isoform>
        <id>A0A482AQV2-2</id>
        <name>2</name>
        <name evidence="6">Poison</name>
        <sequence type="described" ref="VSP_060932"/>
    </isoform>
</comment>
<comment type="similarity">
    <text evidence="7">Belongs to the WTF family.</text>
</comment>
<organism evidence="8">
    <name type="scientific">Schizosaccharomyces kambucha</name>
    <name type="common">Fission yeast</name>
    <dbReference type="NCBI Taxonomy" id="204045"/>
    <lineage>
        <taxon>Eukaryota</taxon>
        <taxon>Fungi</taxon>
        <taxon>Dikarya</taxon>
        <taxon>Ascomycota</taxon>
        <taxon>Taphrinomycotina</taxon>
        <taxon>Schizosaccharomycetes</taxon>
        <taxon>Schizosaccharomycetales</taxon>
        <taxon>Schizosaccharomycetaceae</taxon>
        <taxon>Schizosaccharomyces</taxon>
    </lineage>
</organism>
<reference evidence="8" key="1">
    <citation type="journal article" date="2020" name="PLoS Genet.">
        <title>Dramatically diverse Schizosaccharomyces pombe wtf meiotic drivers all display high gamete-killing efficiency.</title>
        <authorList>
            <person name="Bravo Nunez M.A."/>
            <person name="Sabbarini I.M."/>
            <person name="Eickbush M.T."/>
            <person name="Liang Y."/>
            <person name="Lange J.J."/>
            <person name="Kent A.M."/>
            <person name="Zanders S.E."/>
        </authorList>
    </citation>
    <scope>NUCLEOTIDE SEQUENCE [GENOMIC DNA]</scope>
    <scope>FUNCTION</scope>
    <scope>ALTERNATIVE INITIATION (ISOFORMS 1 AND 2)</scope>
</reference>
<feature type="chain" id="PRO_0000452258" description="Meiotic driver wtf9">
    <location>
        <begin position="1"/>
        <end position="357"/>
    </location>
</feature>
<feature type="transmembrane region" description="Helical" evidence="3">
    <location>
        <begin position="89"/>
        <end position="109"/>
    </location>
</feature>
<feature type="transmembrane region" description="Helical" evidence="3">
    <location>
        <begin position="119"/>
        <end position="139"/>
    </location>
</feature>
<feature type="transmembrane region" description="Helical" evidence="3">
    <location>
        <begin position="149"/>
        <end position="169"/>
    </location>
</feature>
<feature type="transmembrane region" description="Helical" evidence="3">
    <location>
        <begin position="198"/>
        <end position="218"/>
    </location>
</feature>
<feature type="transmembrane region" description="Helical" evidence="3">
    <location>
        <begin position="232"/>
        <end position="252"/>
    </location>
</feature>
<feature type="transmembrane region" description="Helical" evidence="3">
    <location>
        <begin position="256"/>
        <end position="276"/>
    </location>
</feature>
<feature type="transmembrane region" description="Helical" evidence="3">
    <location>
        <begin position="286"/>
        <end position="306"/>
    </location>
</feature>
<feature type="region of interest" description="Disordered" evidence="4">
    <location>
        <begin position="1"/>
        <end position="39"/>
    </location>
</feature>
<feature type="compositionally biased region" description="Basic and acidic residues" evidence="4">
    <location>
        <begin position="11"/>
        <end position="29"/>
    </location>
</feature>
<feature type="splice variant" id="VSP_060932" description="In isoform 2." evidence="5">
    <original>MKNKYYPLRSSMDEMSAKNDNEIDLEKGPLPEYNSEDGSTLPPY</original>
    <variation>ML</variation>
    <location>
        <begin position="1"/>
        <end position="44"/>
    </location>
</feature>
<accession>A0A482AQV2</accession>
<evidence type="ECO:0000250" key="1">
    <source>
        <dbReference type="UniProtKB" id="A0A218N034"/>
    </source>
</evidence>
<evidence type="ECO:0000250" key="2">
    <source>
        <dbReference type="UniProtKB" id="O74420"/>
    </source>
</evidence>
<evidence type="ECO:0000255" key="3"/>
<evidence type="ECO:0000256" key="4">
    <source>
        <dbReference type="SAM" id="MobiDB-lite"/>
    </source>
</evidence>
<evidence type="ECO:0000269" key="5">
    <source>
    </source>
</evidence>
<evidence type="ECO:0000303" key="6">
    <source>
    </source>
</evidence>
<evidence type="ECO:0000305" key="7"/>
<evidence type="ECO:0000312" key="8">
    <source>
        <dbReference type="EMBL" id="QBL54500.1"/>
    </source>
</evidence>
<protein>
    <recommendedName>
        <fullName evidence="6">Meiotic driver wtf9</fullName>
    </recommendedName>
</protein>
<sequence length="357" mass="40132">MKNKYYPLRSSMDEMSAKNDNEIDLEKGPLPEYNSEDGSTLPPYSEIWKYIKTVSEDSSTGPTETTNPNVERRQEFKDSHPNIYSLLRLLISVLAVIVVFFTAWVCVNPLEKSIFGKVAFFVTIGITCPILLITIFCFFETWTQAVAQCIKVTVIFLAQCVKVTVISLAKCVKVTAISLAKCVKVTAVGLYNSREKWVVIIWLLWVVICYTLFLRSKFGNLNLNKALICSTCSISAALLLFLLYVRLPFWTLKHMFSGLFQVLGVQSCVVIVTKGLMHLFDKHIDATGYEIEASSLFVIGNFLFFYEMECPGALRRMPKSIRNGIASFLEGTGKAIRGANDNNNNIPLEETEAESEV</sequence>
<proteinExistence type="inferred from homology"/>
<dbReference type="EMBL" id="MH837435">
    <property type="protein sequence ID" value="QBL54500.1"/>
    <property type="molecule type" value="Genomic_DNA"/>
</dbReference>
<dbReference type="GO" id="GO:0072324">
    <property type="term" value="C:ascus epiplasm"/>
    <property type="evidence" value="ECO:0000305"/>
    <property type="project" value="UniProtKB"/>
</dbReference>
<dbReference type="GO" id="GO:0005737">
    <property type="term" value="C:cytoplasm"/>
    <property type="evidence" value="ECO:0000305"/>
    <property type="project" value="UniProtKB"/>
</dbReference>
<dbReference type="GO" id="GO:0005789">
    <property type="term" value="C:endoplasmic reticulum membrane"/>
    <property type="evidence" value="ECO:0007669"/>
    <property type="project" value="UniProtKB-SubCell"/>
</dbReference>
<dbReference type="GO" id="GO:0005774">
    <property type="term" value="C:vacuolar membrane"/>
    <property type="evidence" value="ECO:0007669"/>
    <property type="project" value="UniProtKB-SubCell"/>
</dbReference>
<dbReference type="GO" id="GO:0110134">
    <property type="term" value="P:meiotic drive"/>
    <property type="evidence" value="ECO:0000314"/>
    <property type="project" value="UniProtKB"/>
</dbReference>
<dbReference type="InterPro" id="IPR004982">
    <property type="entry name" value="WTF"/>
</dbReference>
<dbReference type="Pfam" id="PF03303">
    <property type="entry name" value="WTF"/>
    <property type="match status" value="2"/>
</dbReference>
<name>WTF9_SCHKA</name>
<gene>
    <name evidence="8" type="primary">wtf9</name>
</gene>